<name>UPPP2_STUS1</name>
<proteinExistence type="inferred from homology"/>
<feature type="chain" id="PRO_0000303034" description="Undecaprenyl-diphosphatase 2">
    <location>
        <begin position="1"/>
        <end position="270"/>
    </location>
</feature>
<feature type="transmembrane region" description="Helical" evidence="1">
    <location>
        <begin position="1"/>
        <end position="21"/>
    </location>
</feature>
<feature type="transmembrane region" description="Helical" evidence="1">
    <location>
        <begin position="39"/>
        <end position="59"/>
    </location>
</feature>
<feature type="transmembrane region" description="Helical" evidence="1">
    <location>
        <begin position="87"/>
        <end position="107"/>
    </location>
</feature>
<feature type="transmembrane region" description="Helical" evidence="1">
    <location>
        <begin position="114"/>
        <end position="134"/>
    </location>
</feature>
<feature type="transmembrane region" description="Helical" evidence="1">
    <location>
        <begin position="147"/>
        <end position="167"/>
    </location>
</feature>
<feature type="transmembrane region" description="Helical" evidence="1">
    <location>
        <begin position="190"/>
        <end position="210"/>
    </location>
</feature>
<feature type="transmembrane region" description="Helical" evidence="1">
    <location>
        <begin position="221"/>
        <end position="241"/>
    </location>
</feature>
<feature type="transmembrane region" description="Helical" evidence="1">
    <location>
        <begin position="247"/>
        <end position="267"/>
    </location>
</feature>
<protein>
    <recommendedName>
        <fullName evidence="1">Undecaprenyl-diphosphatase 2</fullName>
        <ecNumber evidence="1">3.6.1.27</ecNumber>
    </recommendedName>
    <alternativeName>
        <fullName evidence="1">Bacitracin resistance protein 2</fullName>
    </alternativeName>
    <alternativeName>
        <fullName evidence="1">Undecaprenyl pyrophosphate phosphatase 2</fullName>
    </alternativeName>
</protein>
<evidence type="ECO:0000255" key="1">
    <source>
        <dbReference type="HAMAP-Rule" id="MF_01006"/>
    </source>
</evidence>
<keyword id="KW-0046">Antibiotic resistance</keyword>
<keyword id="KW-0997">Cell inner membrane</keyword>
<keyword id="KW-1003">Cell membrane</keyword>
<keyword id="KW-0133">Cell shape</keyword>
<keyword id="KW-0961">Cell wall biogenesis/degradation</keyword>
<keyword id="KW-0378">Hydrolase</keyword>
<keyword id="KW-0472">Membrane</keyword>
<keyword id="KW-0573">Peptidoglycan synthesis</keyword>
<keyword id="KW-1185">Reference proteome</keyword>
<keyword id="KW-0812">Transmembrane</keyword>
<keyword id="KW-1133">Transmembrane helix</keyword>
<accession>A4VNS0</accession>
<reference key="1">
    <citation type="journal article" date="2008" name="Proc. Natl. Acad. Sci. U.S.A.">
        <title>Nitrogen fixation island and rhizosphere competence traits in the genome of root-associated Pseudomonas stutzeri A1501.</title>
        <authorList>
            <person name="Yan Y."/>
            <person name="Yang J."/>
            <person name="Dou Y."/>
            <person name="Chen M."/>
            <person name="Ping S."/>
            <person name="Peng J."/>
            <person name="Lu W."/>
            <person name="Zhang W."/>
            <person name="Yao Z."/>
            <person name="Li H."/>
            <person name="Liu W."/>
            <person name="He S."/>
            <person name="Geng L."/>
            <person name="Zhang X."/>
            <person name="Yang F."/>
            <person name="Yu H."/>
            <person name="Zhan Y."/>
            <person name="Li D."/>
            <person name="Lin Z."/>
            <person name="Wang Y."/>
            <person name="Elmerich C."/>
            <person name="Lin M."/>
            <person name="Jin Q."/>
        </authorList>
    </citation>
    <scope>NUCLEOTIDE SEQUENCE [LARGE SCALE GENOMIC DNA]</scope>
    <source>
        <strain>A1501</strain>
    </source>
</reference>
<gene>
    <name evidence="1" type="primary">uppP2</name>
    <name type="ordered locus">PST_2975</name>
</gene>
<sequence length="270" mass="29371">MDLIQIIVLAIVQGLTEFLPVSSSAHLILFPHLVGWDDQGLAFDVAVHLGTLAAVVWYFRQEVFGMTRDWFASLARRERVGDSRLAWAVILGTIPAGIAGLLFKGFIEEQMRSPLVIAWATIGFGLLLWWSDVVSRRTPQPRDEHSLSWKDILLIGCAQALALIPGTSRSGVTMTAGLLLGLSRSGAARFSFLLSIPIIVLASGLSTLDLVEGEVAVDWTAMGLGVVLSAISAYLCIHFFLKLLERVGMLPFVIYRLILGAVLLVLFSGV</sequence>
<organism>
    <name type="scientific">Stutzerimonas stutzeri (strain A1501)</name>
    <name type="common">Pseudomonas stutzeri</name>
    <dbReference type="NCBI Taxonomy" id="379731"/>
    <lineage>
        <taxon>Bacteria</taxon>
        <taxon>Pseudomonadati</taxon>
        <taxon>Pseudomonadota</taxon>
        <taxon>Gammaproteobacteria</taxon>
        <taxon>Pseudomonadales</taxon>
        <taxon>Pseudomonadaceae</taxon>
        <taxon>Stutzerimonas</taxon>
    </lineage>
</organism>
<comment type="function">
    <text evidence="1">Catalyzes the dephosphorylation of undecaprenyl diphosphate (UPP). Confers resistance to bacitracin.</text>
</comment>
<comment type="catalytic activity">
    <reaction evidence="1">
        <text>di-trans,octa-cis-undecaprenyl diphosphate + H2O = di-trans,octa-cis-undecaprenyl phosphate + phosphate + H(+)</text>
        <dbReference type="Rhea" id="RHEA:28094"/>
        <dbReference type="ChEBI" id="CHEBI:15377"/>
        <dbReference type="ChEBI" id="CHEBI:15378"/>
        <dbReference type="ChEBI" id="CHEBI:43474"/>
        <dbReference type="ChEBI" id="CHEBI:58405"/>
        <dbReference type="ChEBI" id="CHEBI:60392"/>
        <dbReference type="EC" id="3.6.1.27"/>
    </reaction>
</comment>
<comment type="subcellular location">
    <subcellularLocation>
        <location evidence="1">Cell inner membrane</location>
        <topology evidence="1">Multi-pass membrane protein</topology>
    </subcellularLocation>
</comment>
<comment type="miscellaneous">
    <text>Bacitracin is thought to be involved in the inhibition of peptidoglycan synthesis by sequestering undecaprenyl diphosphate, thereby reducing the pool of lipid carrier available.</text>
</comment>
<comment type="similarity">
    <text evidence="1">Belongs to the UppP family.</text>
</comment>
<dbReference type="EC" id="3.6.1.27" evidence="1"/>
<dbReference type="EMBL" id="CP000304">
    <property type="protein sequence ID" value="ABP80621.1"/>
    <property type="molecule type" value="Genomic_DNA"/>
</dbReference>
<dbReference type="RefSeq" id="WP_011914076.1">
    <property type="nucleotide sequence ID" value="NC_009434.1"/>
</dbReference>
<dbReference type="SMR" id="A4VNS0"/>
<dbReference type="KEGG" id="psa:PST_2975"/>
<dbReference type="eggNOG" id="COG1968">
    <property type="taxonomic scope" value="Bacteria"/>
</dbReference>
<dbReference type="HOGENOM" id="CLU_060296_1_0_6"/>
<dbReference type="Proteomes" id="UP000000233">
    <property type="component" value="Chromosome"/>
</dbReference>
<dbReference type="GO" id="GO:0005886">
    <property type="term" value="C:plasma membrane"/>
    <property type="evidence" value="ECO:0007669"/>
    <property type="project" value="UniProtKB-SubCell"/>
</dbReference>
<dbReference type="GO" id="GO:0050380">
    <property type="term" value="F:undecaprenyl-diphosphatase activity"/>
    <property type="evidence" value="ECO:0007669"/>
    <property type="project" value="UniProtKB-UniRule"/>
</dbReference>
<dbReference type="GO" id="GO:0071555">
    <property type="term" value="P:cell wall organization"/>
    <property type="evidence" value="ECO:0007669"/>
    <property type="project" value="UniProtKB-KW"/>
</dbReference>
<dbReference type="GO" id="GO:0009252">
    <property type="term" value="P:peptidoglycan biosynthetic process"/>
    <property type="evidence" value="ECO:0007669"/>
    <property type="project" value="UniProtKB-KW"/>
</dbReference>
<dbReference type="GO" id="GO:0008360">
    <property type="term" value="P:regulation of cell shape"/>
    <property type="evidence" value="ECO:0007669"/>
    <property type="project" value="UniProtKB-KW"/>
</dbReference>
<dbReference type="GO" id="GO:0046677">
    <property type="term" value="P:response to antibiotic"/>
    <property type="evidence" value="ECO:0007669"/>
    <property type="project" value="UniProtKB-UniRule"/>
</dbReference>
<dbReference type="HAMAP" id="MF_01006">
    <property type="entry name" value="Undec_diphosphatase"/>
    <property type="match status" value="1"/>
</dbReference>
<dbReference type="InterPro" id="IPR003824">
    <property type="entry name" value="UppP"/>
</dbReference>
<dbReference type="NCBIfam" id="NF001393">
    <property type="entry name" value="PRK00281.2-4"/>
    <property type="match status" value="1"/>
</dbReference>
<dbReference type="NCBIfam" id="TIGR00753">
    <property type="entry name" value="undec_PP_bacA"/>
    <property type="match status" value="1"/>
</dbReference>
<dbReference type="PANTHER" id="PTHR30622">
    <property type="entry name" value="UNDECAPRENYL-DIPHOSPHATASE"/>
    <property type="match status" value="1"/>
</dbReference>
<dbReference type="PANTHER" id="PTHR30622:SF4">
    <property type="entry name" value="UNDECAPRENYL-DIPHOSPHATASE"/>
    <property type="match status" value="1"/>
</dbReference>
<dbReference type="Pfam" id="PF02673">
    <property type="entry name" value="BacA"/>
    <property type="match status" value="1"/>
</dbReference>